<accession>P77736</accession>
<accession>Q2MCA5</accession>
<dbReference type="EMBL" id="U73857">
    <property type="protein sequence ID" value="AAB18044.1"/>
    <property type="molecule type" value="Genomic_DNA"/>
</dbReference>
<dbReference type="EMBL" id="U00096">
    <property type="protein sequence ID" value="AAC73421.1"/>
    <property type="molecule type" value="Genomic_DNA"/>
</dbReference>
<dbReference type="EMBL" id="AP009048">
    <property type="protein sequence ID" value="BAE76101.1"/>
    <property type="molecule type" value="Genomic_DNA"/>
</dbReference>
<dbReference type="PIR" id="F64758">
    <property type="entry name" value="F64758"/>
</dbReference>
<dbReference type="RefSeq" id="NP_414852.1">
    <property type="nucleotide sequence ID" value="NC_000913.3"/>
</dbReference>
<dbReference type="RefSeq" id="WP_000023635.1">
    <property type="nucleotide sequence ID" value="NZ_SSZK01000075.1"/>
</dbReference>
<dbReference type="SMR" id="P77736"/>
<dbReference type="BioGRID" id="4262806">
    <property type="interactions" value="6"/>
</dbReference>
<dbReference type="FunCoup" id="P77736">
    <property type="interactions" value="205"/>
</dbReference>
<dbReference type="IntAct" id="P77736">
    <property type="interactions" value="5"/>
</dbReference>
<dbReference type="STRING" id="511145.b0318"/>
<dbReference type="jPOST" id="P77736"/>
<dbReference type="PaxDb" id="511145-b0318"/>
<dbReference type="EnsemblBacteria" id="AAC73421">
    <property type="protein sequence ID" value="AAC73421"/>
    <property type="gene ID" value="b0318"/>
</dbReference>
<dbReference type="GeneID" id="947681"/>
<dbReference type="KEGG" id="ecj:JW0310"/>
<dbReference type="KEGG" id="eco:b0318"/>
<dbReference type="KEGG" id="ecoc:C3026_01560"/>
<dbReference type="KEGG" id="ecoc:C3026_24730"/>
<dbReference type="PATRIC" id="fig|1411691.4.peg.1959"/>
<dbReference type="EchoBASE" id="EB3358"/>
<dbReference type="eggNOG" id="COG0666">
    <property type="taxonomic scope" value="Bacteria"/>
</dbReference>
<dbReference type="HOGENOM" id="CLU_000134_18_13_6"/>
<dbReference type="InParanoid" id="P77736"/>
<dbReference type="OMA" id="ANPHMTD"/>
<dbReference type="OrthoDB" id="9812708at2"/>
<dbReference type="PhylomeDB" id="P77736"/>
<dbReference type="BioCyc" id="EcoCyc:G6183-MONOMER"/>
<dbReference type="PRO" id="PR:P77736"/>
<dbReference type="Proteomes" id="UP000000625">
    <property type="component" value="Chromosome"/>
</dbReference>
<dbReference type="GO" id="GO:0009314">
    <property type="term" value="P:response to radiation"/>
    <property type="evidence" value="ECO:0000315"/>
    <property type="project" value="EcoCyc"/>
</dbReference>
<dbReference type="FunFam" id="1.25.40.20:FF:000170">
    <property type="entry name" value="Ankyrin repeat protein"/>
    <property type="match status" value="1"/>
</dbReference>
<dbReference type="Gene3D" id="1.25.40.20">
    <property type="entry name" value="Ankyrin repeat-containing domain"/>
    <property type="match status" value="1"/>
</dbReference>
<dbReference type="InterPro" id="IPR002110">
    <property type="entry name" value="Ankyrin_rpt"/>
</dbReference>
<dbReference type="InterPro" id="IPR036770">
    <property type="entry name" value="Ankyrin_rpt-contain_sf"/>
</dbReference>
<dbReference type="PANTHER" id="PTHR24198">
    <property type="entry name" value="ANKYRIN REPEAT AND PROTEIN KINASE DOMAIN-CONTAINING PROTEIN"/>
    <property type="match status" value="1"/>
</dbReference>
<dbReference type="PANTHER" id="PTHR24198:SF165">
    <property type="entry name" value="ANKYRIN REPEAT-CONTAINING PROTEIN-RELATED"/>
    <property type="match status" value="1"/>
</dbReference>
<dbReference type="Pfam" id="PF12796">
    <property type="entry name" value="Ank_2"/>
    <property type="match status" value="2"/>
</dbReference>
<dbReference type="SMART" id="SM00248">
    <property type="entry name" value="ANK"/>
    <property type="match status" value="6"/>
</dbReference>
<dbReference type="SUPFAM" id="SSF48403">
    <property type="entry name" value="Ankyrin repeat"/>
    <property type="match status" value="1"/>
</dbReference>
<dbReference type="PROSITE" id="PS50297">
    <property type="entry name" value="ANK_REP_REGION"/>
    <property type="match status" value="1"/>
</dbReference>
<dbReference type="PROSITE" id="PS50088">
    <property type="entry name" value="ANK_REPEAT"/>
    <property type="match status" value="3"/>
</dbReference>
<keyword id="KW-0040">ANK repeat</keyword>
<keyword id="KW-1185">Reference proteome</keyword>
<keyword id="KW-0677">Repeat</keyword>
<proteinExistence type="predicted"/>
<gene>
    <name type="primary">yahD</name>
    <name type="ordered locus">b0318</name>
    <name type="ordered locus">JW0310</name>
</gene>
<feature type="chain" id="PRO_0000067237" description="Putative ankyrin repeat protein YahD">
    <location>
        <begin position="1"/>
        <end position="201"/>
    </location>
</feature>
<feature type="repeat" description="ANK 1">
    <location>
        <begin position="5"/>
        <end position="34"/>
    </location>
</feature>
<feature type="repeat" description="ANK 2">
    <location>
        <begin position="38"/>
        <end position="67"/>
    </location>
</feature>
<feature type="repeat" description="ANK 3">
    <location>
        <begin position="71"/>
        <end position="100"/>
    </location>
</feature>
<feature type="repeat" description="ANK 4">
    <location>
        <begin position="104"/>
        <end position="134"/>
    </location>
</feature>
<feature type="repeat" description="ANK 5">
    <location>
        <begin position="138"/>
        <end position="172"/>
    </location>
</feature>
<feature type="repeat" description="ANK 6">
    <location>
        <begin position="176"/>
        <end position="201"/>
    </location>
</feature>
<protein>
    <recommendedName>
        <fullName>Putative ankyrin repeat protein YahD</fullName>
    </recommendedName>
</protein>
<sequence>MSIKNLPADYLLAAQQGDIDKVKTCLALGVDINTCDRQGKTAITLASLYQQYACVQALIDAGADINKQDHTCLNPFLISCLNDDLTLLRIILPAKPDLNCVTRFGGVGLTPACEKGHLSIVKELLAHTEINVNQTNHVGWTPLLEAIVLNDGGIKQQAIVQLLLEHGASPHLTDKYGKTPLELARERGFEEIAQLLIAAGA</sequence>
<organism>
    <name type="scientific">Escherichia coli (strain K12)</name>
    <dbReference type="NCBI Taxonomy" id="83333"/>
    <lineage>
        <taxon>Bacteria</taxon>
        <taxon>Pseudomonadati</taxon>
        <taxon>Pseudomonadota</taxon>
        <taxon>Gammaproteobacteria</taxon>
        <taxon>Enterobacterales</taxon>
        <taxon>Enterobacteriaceae</taxon>
        <taxon>Escherichia</taxon>
    </lineage>
</organism>
<reference key="1">
    <citation type="submission" date="1997-01" db="EMBL/GenBank/DDBJ databases">
        <title>Sequence of minutes 4-25 of Escherichia coli.</title>
        <authorList>
            <person name="Chung E."/>
            <person name="Allen E."/>
            <person name="Araujo R."/>
            <person name="Aparicio A.M."/>
            <person name="Davis K."/>
            <person name="Duncan M."/>
            <person name="Federspiel N."/>
            <person name="Hyman R."/>
            <person name="Kalman S."/>
            <person name="Komp C."/>
            <person name="Kurdi O."/>
            <person name="Lew H."/>
            <person name="Lin D."/>
            <person name="Namath A."/>
            <person name="Oefner P."/>
            <person name="Roberts D."/>
            <person name="Schramm S."/>
            <person name="Davis R.W."/>
        </authorList>
    </citation>
    <scope>NUCLEOTIDE SEQUENCE [LARGE SCALE GENOMIC DNA]</scope>
    <source>
        <strain>K12 / MG1655 / ATCC 47076</strain>
    </source>
</reference>
<reference key="2">
    <citation type="journal article" date="1997" name="Science">
        <title>The complete genome sequence of Escherichia coli K-12.</title>
        <authorList>
            <person name="Blattner F.R."/>
            <person name="Plunkett G. III"/>
            <person name="Bloch C.A."/>
            <person name="Perna N.T."/>
            <person name="Burland V."/>
            <person name="Riley M."/>
            <person name="Collado-Vides J."/>
            <person name="Glasner J.D."/>
            <person name="Rode C.K."/>
            <person name="Mayhew G.F."/>
            <person name="Gregor J."/>
            <person name="Davis N.W."/>
            <person name="Kirkpatrick H.A."/>
            <person name="Goeden M.A."/>
            <person name="Rose D.J."/>
            <person name="Mau B."/>
            <person name="Shao Y."/>
        </authorList>
    </citation>
    <scope>NUCLEOTIDE SEQUENCE [LARGE SCALE GENOMIC DNA]</scope>
    <source>
        <strain>K12 / MG1655 / ATCC 47076</strain>
    </source>
</reference>
<reference key="3">
    <citation type="journal article" date="2006" name="Mol. Syst. Biol.">
        <title>Highly accurate genome sequences of Escherichia coli K-12 strains MG1655 and W3110.</title>
        <authorList>
            <person name="Hayashi K."/>
            <person name="Morooka N."/>
            <person name="Yamamoto Y."/>
            <person name="Fujita K."/>
            <person name="Isono K."/>
            <person name="Choi S."/>
            <person name="Ohtsubo E."/>
            <person name="Baba T."/>
            <person name="Wanner B.L."/>
            <person name="Mori H."/>
            <person name="Horiuchi T."/>
        </authorList>
    </citation>
    <scope>NUCLEOTIDE SEQUENCE [LARGE SCALE GENOMIC DNA]</scope>
    <source>
        <strain>K12 / W3110 / ATCC 27325 / DSM 5911</strain>
    </source>
</reference>
<name>YAHD_ECOLI</name>